<gene>
    <name evidence="1" type="primary">metK</name>
    <name type="ordered locus">GWCH70_2777</name>
</gene>
<proteinExistence type="inferred from homology"/>
<name>METK_GEOSW</name>
<reference key="1">
    <citation type="submission" date="2009-06" db="EMBL/GenBank/DDBJ databases">
        <title>Complete sequence of chromosome of Geopacillus sp. WCH70.</title>
        <authorList>
            <consortium name="US DOE Joint Genome Institute"/>
            <person name="Lucas S."/>
            <person name="Copeland A."/>
            <person name="Lapidus A."/>
            <person name="Glavina del Rio T."/>
            <person name="Dalin E."/>
            <person name="Tice H."/>
            <person name="Bruce D."/>
            <person name="Goodwin L."/>
            <person name="Pitluck S."/>
            <person name="Chertkov O."/>
            <person name="Brettin T."/>
            <person name="Detter J.C."/>
            <person name="Han C."/>
            <person name="Larimer F."/>
            <person name="Land M."/>
            <person name="Hauser L."/>
            <person name="Kyrpides N."/>
            <person name="Mikhailova N."/>
            <person name="Brumm P."/>
            <person name="Mead D.A."/>
            <person name="Richardson P."/>
        </authorList>
    </citation>
    <scope>NUCLEOTIDE SEQUENCE [LARGE SCALE GENOMIC DNA]</scope>
    <source>
        <strain>WCH70</strain>
    </source>
</reference>
<organism>
    <name type="scientific">Geobacillus sp. (strain WCH70)</name>
    <dbReference type="NCBI Taxonomy" id="471223"/>
    <lineage>
        <taxon>Bacteria</taxon>
        <taxon>Bacillati</taxon>
        <taxon>Bacillota</taxon>
        <taxon>Bacilli</taxon>
        <taxon>Bacillales</taxon>
        <taxon>Anoxybacillaceae</taxon>
        <taxon>Geobacillus</taxon>
    </lineage>
</organism>
<accession>C5D6E9</accession>
<sequence length="403" mass="44220">MSKKRRLFTSESVTEGHPDKICDQISDAILDAILEKDPNARVACETSVTTGLVLVSGEITTSTYVDIPKIVRDTVREIGYTRAKYGFDADTCAVLTSIDEQSPDIAMGVDKALEAREGQMTDEEIEAIGAGDQGLMFGFACNETKELMPLPISLAHRLARRLSEVRKEAILPYLRPDGKTQVTVEYDENGKPVRIDTIVVSAQHHPEITQEQIERDIKEHVIKPIVPAELIDENTKYFINPTGRFVIGGPQGDAGLTGRKIIVDTYGGYARHGGGAFSGKDPTKVDRSAAYAARYVAKNIVASGLADKCEVQLAYAIGVARPVSISIDTFGTGKVSEDILIEVVRNNFDLRPAGIIKMLDLRRPIYKQTAAYGHFGRTDIDLPWERTDKAETLKEQALALAKQ</sequence>
<evidence type="ECO:0000255" key="1">
    <source>
        <dbReference type="HAMAP-Rule" id="MF_00086"/>
    </source>
</evidence>
<comment type="function">
    <text evidence="1">Catalyzes the formation of S-adenosylmethionine (AdoMet) from methionine and ATP. The overall synthetic reaction is composed of two sequential steps, AdoMet formation and the subsequent tripolyphosphate hydrolysis which occurs prior to release of AdoMet from the enzyme.</text>
</comment>
<comment type="catalytic activity">
    <reaction evidence="1">
        <text>L-methionine + ATP + H2O = S-adenosyl-L-methionine + phosphate + diphosphate</text>
        <dbReference type="Rhea" id="RHEA:21080"/>
        <dbReference type="ChEBI" id="CHEBI:15377"/>
        <dbReference type="ChEBI" id="CHEBI:30616"/>
        <dbReference type="ChEBI" id="CHEBI:33019"/>
        <dbReference type="ChEBI" id="CHEBI:43474"/>
        <dbReference type="ChEBI" id="CHEBI:57844"/>
        <dbReference type="ChEBI" id="CHEBI:59789"/>
        <dbReference type="EC" id="2.5.1.6"/>
    </reaction>
</comment>
<comment type="cofactor">
    <cofactor evidence="1">
        <name>Mg(2+)</name>
        <dbReference type="ChEBI" id="CHEBI:18420"/>
    </cofactor>
    <text evidence="1">Binds 2 divalent ions per subunit.</text>
</comment>
<comment type="cofactor">
    <cofactor evidence="1">
        <name>K(+)</name>
        <dbReference type="ChEBI" id="CHEBI:29103"/>
    </cofactor>
    <text evidence="1">Binds 1 potassium ion per subunit.</text>
</comment>
<comment type="pathway">
    <text evidence="1">Amino-acid biosynthesis; S-adenosyl-L-methionine biosynthesis; S-adenosyl-L-methionine from L-methionine: step 1/1.</text>
</comment>
<comment type="subunit">
    <text evidence="1">Homotetramer; dimer of dimers.</text>
</comment>
<comment type="subcellular location">
    <subcellularLocation>
        <location evidence="1">Cytoplasm</location>
    </subcellularLocation>
</comment>
<comment type="similarity">
    <text evidence="1">Belongs to the AdoMet synthase family.</text>
</comment>
<feature type="chain" id="PRO_1000202619" description="S-adenosylmethionine synthase">
    <location>
        <begin position="1"/>
        <end position="403"/>
    </location>
</feature>
<feature type="region of interest" description="Flexible loop" evidence="1">
    <location>
        <begin position="101"/>
        <end position="111"/>
    </location>
</feature>
<feature type="binding site" description="in other chain" evidence="1">
    <location>
        <position position="17"/>
    </location>
    <ligand>
        <name>ATP</name>
        <dbReference type="ChEBI" id="CHEBI:30616"/>
        <note>ligand shared between two neighboring subunits</note>
    </ligand>
</feature>
<feature type="binding site" evidence="1">
    <location>
        <position position="19"/>
    </location>
    <ligand>
        <name>Mg(2+)</name>
        <dbReference type="ChEBI" id="CHEBI:18420"/>
    </ligand>
</feature>
<feature type="binding site" evidence="1">
    <location>
        <position position="45"/>
    </location>
    <ligand>
        <name>K(+)</name>
        <dbReference type="ChEBI" id="CHEBI:29103"/>
    </ligand>
</feature>
<feature type="binding site" description="in other chain" evidence="1">
    <location>
        <position position="58"/>
    </location>
    <ligand>
        <name>L-methionine</name>
        <dbReference type="ChEBI" id="CHEBI:57844"/>
        <note>ligand shared between two neighboring subunits</note>
    </ligand>
</feature>
<feature type="binding site" description="in other chain" evidence="1">
    <location>
        <position position="101"/>
    </location>
    <ligand>
        <name>L-methionine</name>
        <dbReference type="ChEBI" id="CHEBI:57844"/>
        <note>ligand shared between two neighboring subunits</note>
    </ligand>
</feature>
<feature type="binding site" description="in other chain" evidence="1">
    <location>
        <begin position="177"/>
        <end position="179"/>
    </location>
    <ligand>
        <name>ATP</name>
        <dbReference type="ChEBI" id="CHEBI:30616"/>
        <note>ligand shared between two neighboring subunits</note>
    </ligand>
</feature>
<feature type="binding site" description="in other chain" evidence="1">
    <location>
        <begin position="244"/>
        <end position="245"/>
    </location>
    <ligand>
        <name>ATP</name>
        <dbReference type="ChEBI" id="CHEBI:30616"/>
        <note>ligand shared between two neighboring subunits</note>
    </ligand>
</feature>
<feature type="binding site" evidence="1">
    <location>
        <position position="253"/>
    </location>
    <ligand>
        <name>ATP</name>
        <dbReference type="ChEBI" id="CHEBI:30616"/>
        <note>ligand shared between two neighboring subunits</note>
    </ligand>
</feature>
<feature type="binding site" evidence="1">
    <location>
        <position position="253"/>
    </location>
    <ligand>
        <name>L-methionine</name>
        <dbReference type="ChEBI" id="CHEBI:57844"/>
        <note>ligand shared between two neighboring subunits</note>
    </ligand>
</feature>
<feature type="binding site" description="in other chain" evidence="1">
    <location>
        <begin position="259"/>
        <end position="260"/>
    </location>
    <ligand>
        <name>ATP</name>
        <dbReference type="ChEBI" id="CHEBI:30616"/>
        <note>ligand shared between two neighboring subunits</note>
    </ligand>
</feature>
<feature type="binding site" evidence="1">
    <location>
        <position position="276"/>
    </location>
    <ligand>
        <name>ATP</name>
        <dbReference type="ChEBI" id="CHEBI:30616"/>
        <note>ligand shared between two neighboring subunits</note>
    </ligand>
</feature>
<feature type="binding site" evidence="1">
    <location>
        <position position="280"/>
    </location>
    <ligand>
        <name>ATP</name>
        <dbReference type="ChEBI" id="CHEBI:30616"/>
        <note>ligand shared between two neighboring subunits</note>
    </ligand>
</feature>
<feature type="binding site" description="in other chain" evidence="1">
    <location>
        <position position="284"/>
    </location>
    <ligand>
        <name>L-methionine</name>
        <dbReference type="ChEBI" id="CHEBI:57844"/>
        <note>ligand shared between two neighboring subunits</note>
    </ligand>
</feature>
<dbReference type="EC" id="2.5.1.6" evidence="1"/>
<dbReference type="EMBL" id="CP001638">
    <property type="protein sequence ID" value="ACS25465.1"/>
    <property type="molecule type" value="Genomic_DNA"/>
</dbReference>
<dbReference type="SMR" id="C5D6E9"/>
<dbReference type="STRING" id="471223.GWCH70_2777"/>
<dbReference type="KEGG" id="gwc:GWCH70_2777"/>
<dbReference type="eggNOG" id="COG0192">
    <property type="taxonomic scope" value="Bacteria"/>
</dbReference>
<dbReference type="HOGENOM" id="CLU_041802_1_1_9"/>
<dbReference type="OrthoDB" id="9801686at2"/>
<dbReference type="UniPathway" id="UPA00315">
    <property type="reaction ID" value="UER00080"/>
</dbReference>
<dbReference type="GO" id="GO:0005737">
    <property type="term" value="C:cytoplasm"/>
    <property type="evidence" value="ECO:0007669"/>
    <property type="project" value="UniProtKB-SubCell"/>
</dbReference>
<dbReference type="GO" id="GO:0005524">
    <property type="term" value="F:ATP binding"/>
    <property type="evidence" value="ECO:0007669"/>
    <property type="project" value="UniProtKB-UniRule"/>
</dbReference>
<dbReference type="GO" id="GO:0000287">
    <property type="term" value="F:magnesium ion binding"/>
    <property type="evidence" value="ECO:0007669"/>
    <property type="project" value="UniProtKB-UniRule"/>
</dbReference>
<dbReference type="GO" id="GO:0004478">
    <property type="term" value="F:methionine adenosyltransferase activity"/>
    <property type="evidence" value="ECO:0007669"/>
    <property type="project" value="UniProtKB-UniRule"/>
</dbReference>
<dbReference type="GO" id="GO:0006730">
    <property type="term" value="P:one-carbon metabolic process"/>
    <property type="evidence" value="ECO:0007669"/>
    <property type="project" value="UniProtKB-KW"/>
</dbReference>
<dbReference type="GO" id="GO:0006556">
    <property type="term" value="P:S-adenosylmethionine biosynthetic process"/>
    <property type="evidence" value="ECO:0007669"/>
    <property type="project" value="UniProtKB-UniRule"/>
</dbReference>
<dbReference type="CDD" id="cd18079">
    <property type="entry name" value="S-AdoMet_synt"/>
    <property type="match status" value="1"/>
</dbReference>
<dbReference type="FunFam" id="3.30.300.10:FF:000003">
    <property type="entry name" value="S-adenosylmethionine synthase"/>
    <property type="match status" value="1"/>
</dbReference>
<dbReference type="FunFam" id="3.30.300.10:FF:000004">
    <property type="entry name" value="S-adenosylmethionine synthase"/>
    <property type="match status" value="1"/>
</dbReference>
<dbReference type="Gene3D" id="3.30.300.10">
    <property type="match status" value="3"/>
</dbReference>
<dbReference type="HAMAP" id="MF_00086">
    <property type="entry name" value="S_AdoMet_synth1"/>
    <property type="match status" value="1"/>
</dbReference>
<dbReference type="InterPro" id="IPR022631">
    <property type="entry name" value="ADOMET_SYNTHASE_CS"/>
</dbReference>
<dbReference type="InterPro" id="IPR022630">
    <property type="entry name" value="S-AdoMet_synt_C"/>
</dbReference>
<dbReference type="InterPro" id="IPR022629">
    <property type="entry name" value="S-AdoMet_synt_central"/>
</dbReference>
<dbReference type="InterPro" id="IPR022628">
    <property type="entry name" value="S-AdoMet_synt_N"/>
</dbReference>
<dbReference type="InterPro" id="IPR002133">
    <property type="entry name" value="S-AdoMet_synthetase"/>
</dbReference>
<dbReference type="InterPro" id="IPR022636">
    <property type="entry name" value="S-AdoMet_synthetase_sfam"/>
</dbReference>
<dbReference type="NCBIfam" id="TIGR01034">
    <property type="entry name" value="metK"/>
    <property type="match status" value="1"/>
</dbReference>
<dbReference type="PANTHER" id="PTHR11964">
    <property type="entry name" value="S-ADENOSYLMETHIONINE SYNTHETASE"/>
    <property type="match status" value="1"/>
</dbReference>
<dbReference type="Pfam" id="PF02773">
    <property type="entry name" value="S-AdoMet_synt_C"/>
    <property type="match status" value="1"/>
</dbReference>
<dbReference type="Pfam" id="PF02772">
    <property type="entry name" value="S-AdoMet_synt_M"/>
    <property type="match status" value="1"/>
</dbReference>
<dbReference type="Pfam" id="PF00438">
    <property type="entry name" value="S-AdoMet_synt_N"/>
    <property type="match status" value="1"/>
</dbReference>
<dbReference type="PIRSF" id="PIRSF000497">
    <property type="entry name" value="MAT"/>
    <property type="match status" value="1"/>
</dbReference>
<dbReference type="SUPFAM" id="SSF55973">
    <property type="entry name" value="S-adenosylmethionine synthetase"/>
    <property type="match status" value="3"/>
</dbReference>
<dbReference type="PROSITE" id="PS00376">
    <property type="entry name" value="ADOMET_SYNTHASE_1"/>
    <property type="match status" value="1"/>
</dbReference>
<dbReference type="PROSITE" id="PS00377">
    <property type="entry name" value="ADOMET_SYNTHASE_2"/>
    <property type="match status" value="1"/>
</dbReference>
<keyword id="KW-0067">ATP-binding</keyword>
<keyword id="KW-0963">Cytoplasm</keyword>
<keyword id="KW-0460">Magnesium</keyword>
<keyword id="KW-0479">Metal-binding</keyword>
<keyword id="KW-0547">Nucleotide-binding</keyword>
<keyword id="KW-0554">One-carbon metabolism</keyword>
<keyword id="KW-0630">Potassium</keyword>
<keyword id="KW-0808">Transferase</keyword>
<protein>
    <recommendedName>
        <fullName evidence="1">S-adenosylmethionine synthase</fullName>
        <shortName evidence="1">AdoMet synthase</shortName>
        <ecNumber evidence="1">2.5.1.6</ecNumber>
    </recommendedName>
    <alternativeName>
        <fullName evidence="1">MAT</fullName>
    </alternativeName>
    <alternativeName>
        <fullName evidence="1">Methionine adenosyltransferase</fullName>
    </alternativeName>
</protein>